<dbReference type="EC" id="2.1.1.192" evidence="1"/>
<dbReference type="EMBL" id="CP001407">
    <property type="protein sequence ID" value="ACO28272.1"/>
    <property type="molecule type" value="Genomic_DNA"/>
</dbReference>
<dbReference type="RefSeq" id="WP_000450543.1">
    <property type="nucleotide sequence ID" value="NZ_CP009318.1"/>
</dbReference>
<dbReference type="SMR" id="C1EP88"/>
<dbReference type="GeneID" id="75087000"/>
<dbReference type="KEGG" id="bcx:BCA_3964"/>
<dbReference type="PATRIC" id="fig|572264.18.peg.3920"/>
<dbReference type="Proteomes" id="UP000002210">
    <property type="component" value="Chromosome"/>
</dbReference>
<dbReference type="GO" id="GO:0005737">
    <property type="term" value="C:cytoplasm"/>
    <property type="evidence" value="ECO:0007669"/>
    <property type="project" value="UniProtKB-SubCell"/>
</dbReference>
<dbReference type="GO" id="GO:0051539">
    <property type="term" value="F:4 iron, 4 sulfur cluster binding"/>
    <property type="evidence" value="ECO:0007669"/>
    <property type="project" value="UniProtKB-UniRule"/>
</dbReference>
<dbReference type="GO" id="GO:0046872">
    <property type="term" value="F:metal ion binding"/>
    <property type="evidence" value="ECO:0007669"/>
    <property type="project" value="UniProtKB-KW"/>
</dbReference>
<dbReference type="GO" id="GO:0070040">
    <property type="term" value="F:rRNA (adenine(2503)-C2-)-methyltransferase activity"/>
    <property type="evidence" value="ECO:0007669"/>
    <property type="project" value="UniProtKB-UniRule"/>
</dbReference>
<dbReference type="GO" id="GO:0019843">
    <property type="term" value="F:rRNA binding"/>
    <property type="evidence" value="ECO:0007669"/>
    <property type="project" value="UniProtKB-UniRule"/>
</dbReference>
<dbReference type="GO" id="GO:0002935">
    <property type="term" value="F:tRNA (adenine(37)-C2)-methyltransferase activity"/>
    <property type="evidence" value="ECO:0007669"/>
    <property type="project" value="UniProtKB-UniRule"/>
</dbReference>
<dbReference type="GO" id="GO:0000049">
    <property type="term" value="F:tRNA binding"/>
    <property type="evidence" value="ECO:0007669"/>
    <property type="project" value="UniProtKB-UniRule"/>
</dbReference>
<dbReference type="GO" id="GO:0070475">
    <property type="term" value="P:rRNA base methylation"/>
    <property type="evidence" value="ECO:0007669"/>
    <property type="project" value="UniProtKB-UniRule"/>
</dbReference>
<dbReference type="GO" id="GO:0030488">
    <property type="term" value="P:tRNA methylation"/>
    <property type="evidence" value="ECO:0007669"/>
    <property type="project" value="UniProtKB-UniRule"/>
</dbReference>
<dbReference type="CDD" id="cd01335">
    <property type="entry name" value="Radical_SAM"/>
    <property type="match status" value="1"/>
</dbReference>
<dbReference type="FunFam" id="1.10.150.530:FF:000002">
    <property type="entry name" value="Probable dual-specificity RNA methyltransferase RlmN"/>
    <property type="match status" value="1"/>
</dbReference>
<dbReference type="FunFam" id="3.20.20.70:FF:000014">
    <property type="entry name" value="Probable dual-specificity RNA methyltransferase RlmN"/>
    <property type="match status" value="1"/>
</dbReference>
<dbReference type="Gene3D" id="1.10.150.530">
    <property type="match status" value="1"/>
</dbReference>
<dbReference type="Gene3D" id="3.20.20.70">
    <property type="entry name" value="Aldolase class I"/>
    <property type="match status" value="1"/>
</dbReference>
<dbReference type="HAMAP" id="MF_01849">
    <property type="entry name" value="RNA_methyltr_RlmN"/>
    <property type="match status" value="1"/>
</dbReference>
<dbReference type="InterPro" id="IPR013785">
    <property type="entry name" value="Aldolase_TIM"/>
</dbReference>
<dbReference type="InterPro" id="IPR040072">
    <property type="entry name" value="Methyltransferase_A"/>
</dbReference>
<dbReference type="InterPro" id="IPR048641">
    <property type="entry name" value="RlmN_N"/>
</dbReference>
<dbReference type="InterPro" id="IPR027492">
    <property type="entry name" value="RNA_MTrfase_RlmN"/>
</dbReference>
<dbReference type="InterPro" id="IPR004383">
    <property type="entry name" value="rRNA_lsu_MTrfase_RlmN/Cfr"/>
</dbReference>
<dbReference type="InterPro" id="IPR007197">
    <property type="entry name" value="rSAM"/>
</dbReference>
<dbReference type="NCBIfam" id="TIGR00048">
    <property type="entry name" value="rRNA_mod_RlmN"/>
    <property type="match status" value="1"/>
</dbReference>
<dbReference type="PANTHER" id="PTHR30544">
    <property type="entry name" value="23S RRNA METHYLTRANSFERASE"/>
    <property type="match status" value="1"/>
</dbReference>
<dbReference type="PANTHER" id="PTHR30544:SF5">
    <property type="entry name" value="RADICAL SAM CORE DOMAIN-CONTAINING PROTEIN"/>
    <property type="match status" value="1"/>
</dbReference>
<dbReference type="Pfam" id="PF04055">
    <property type="entry name" value="Radical_SAM"/>
    <property type="match status" value="1"/>
</dbReference>
<dbReference type="Pfam" id="PF21016">
    <property type="entry name" value="RlmN_N"/>
    <property type="match status" value="1"/>
</dbReference>
<dbReference type="PIRSF" id="PIRSF006004">
    <property type="entry name" value="CHP00048"/>
    <property type="match status" value="1"/>
</dbReference>
<dbReference type="SFLD" id="SFLDF00275">
    <property type="entry name" value="adenosine_C2_methyltransferase"/>
    <property type="match status" value="1"/>
</dbReference>
<dbReference type="SFLD" id="SFLDS00029">
    <property type="entry name" value="Radical_SAM"/>
    <property type="match status" value="1"/>
</dbReference>
<dbReference type="SUPFAM" id="SSF102114">
    <property type="entry name" value="Radical SAM enzymes"/>
    <property type="match status" value="1"/>
</dbReference>
<dbReference type="PROSITE" id="PS51918">
    <property type="entry name" value="RADICAL_SAM"/>
    <property type="match status" value="1"/>
</dbReference>
<comment type="function">
    <text evidence="1">Specifically methylates position 2 of adenine 2503 in 23S rRNA and position 2 of adenine 37 in tRNAs.</text>
</comment>
<comment type="catalytic activity">
    <reaction evidence="1">
        <text>adenosine(2503) in 23S rRNA + 2 reduced [2Fe-2S]-[ferredoxin] + 2 S-adenosyl-L-methionine = 2-methyladenosine(2503) in 23S rRNA + 5'-deoxyadenosine + L-methionine + 2 oxidized [2Fe-2S]-[ferredoxin] + S-adenosyl-L-homocysteine</text>
        <dbReference type="Rhea" id="RHEA:42916"/>
        <dbReference type="Rhea" id="RHEA-COMP:10000"/>
        <dbReference type="Rhea" id="RHEA-COMP:10001"/>
        <dbReference type="Rhea" id="RHEA-COMP:10152"/>
        <dbReference type="Rhea" id="RHEA-COMP:10282"/>
        <dbReference type="ChEBI" id="CHEBI:17319"/>
        <dbReference type="ChEBI" id="CHEBI:33737"/>
        <dbReference type="ChEBI" id="CHEBI:33738"/>
        <dbReference type="ChEBI" id="CHEBI:57844"/>
        <dbReference type="ChEBI" id="CHEBI:57856"/>
        <dbReference type="ChEBI" id="CHEBI:59789"/>
        <dbReference type="ChEBI" id="CHEBI:74411"/>
        <dbReference type="ChEBI" id="CHEBI:74497"/>
        <dbReference type="EC" id="2.1.1.192"/>
    </reaction>
</comment>
<comment type="catalytic activity">
    <reaction evidence="1">
        <text>adenosine(37) in tRNA + 2 reduced [2Fe-2S]-[ferredoxin] + 2 S-adenosyl-L-methionine = 2-methyladenosine(37) in tRNA + 5'-deoxyadenosine + L-methionine + 2 oxidized [2Fe-2S]-[ferredoxin] + S-adenosyl-L-homocysteine</text>
        <dbReference type="Rhea" id="RHEA:43332"/>
        <dbReference type="Rhea" id="RHEA-COMP:10000"/>
        <dbReference type="Rhea" id="RHEA-COMP:10001"/>
        <dbReference type="Rhea" id="RHEA-COMP:10162"/>
        <dbReference type="Rhea" id="RHEA-COMP:10485"/>
        <dbReference type="ChEBI" id="CHEBI:17319"/>
        <dbReference type="ChEBI" id="CHEBI:33737"/>
        <dbReference type="ChEBI" id="CHEBI:33738"/>
        <dbReference type="ChEBI" id="CHEBI:57844"/>
        <dbReference type="ChEBI" id="CHEBI:57856"/>
        <dbReference type="ChEBI" id="CHEBI:59789"/>
        <dbReference type="ChEBI" id="CHEBI:74411"/>
        <dbReference type="ChEBI" id="CHEBI:74497"/>
        <dbReference type="EC" id="2.1.1.192"/>
    </reaction>
</comment>
<comment type="cofactor">
    <cofactor evidence="1">
        <name>[4Fe-4S] cluster</name>
        <dbReference type="ChEBI" id="CHEBI:49883"/>
    </cofactor>
    <text evidence="1">Binds 1 [4Fe-4S] cluster. The cluster is coordinated with 3 cysteines and an exchangeable S-adenosyl-L-methionine.</text>
</comment>
<comment type="subcellular location">
    <subcellularLocation>
        <location evidence="1">Cytoplasm</location>
    </subcellularLocation>
</comment>
<comment type="miscellaneous">
    <text evidence="1">Reaction proceeds by a ping-pong mechanism involving intermediate methylation of a conserved cysteine residue.</text>
</comment>
<comment type="similarity">
    <text evidence="1">Belongs to the radical SAM superfamily. RlmN family.</text>
</comment>
<reference key="1">
    <citation type="submission" date="2009-02" db="EMBL/GenBank/DDBJ databases">
        <title>Genome sequence of Bacillus cereus 03BB102.</title>
        <authorList>
            <person name="Dodson R.J."/>
            <person name="Jackson P."/>
            <person name="Munk A.C."/>
            <person name="Brettin T."/>
            <person name="Bruce D."/>
            <person name="Detter C."/>
            <person name="Tapia R."/>
            <person name="Han C."/>
            <person name="Sutton G."/>
            <person name="Sims D."/>
        </authorList>
    </citation>
    <scope>NUCLEOTIDE SEQUENCE [LARGE SCALE GENOMIC DNA]</scope>
    <source>
        <strain>03BB102</strain>
    </source>
</reference>
<feature type="chain" id="PRO_1000188549" description="Probable dual-specificity RNA methyltransferase RlmN">
    <location>
        <begin position="1"/>
        <end position="362"/>
    </location>
</feature>
<feature type="domain" description="Radical SAM core" evidence="2">
    <location>
        <begin position="111"/>
        <end position="344"/>
    </location>
</feature>
<feature type="active site" description="Proton acceptor" evidence="1">
    <location>
        <position position="105"/>
    </location>
</feature>
<feature type="active site" description="S-methylcysteine intermediate" evidence="1">
    <location>
        <position position="349"/>
    </location>
</feature>
<feature type="binding site" evidence="1">
    <location>
        <position position="125"/>
    </location>
    <ligand>
        <name>[4Fe-4S] cluster</name>
        <dbReference type="ChEBI" id="CHEBI:49883"/>
        <note>4Fe-4S-S-AdoMet</note>
    </ligand>
</feature>
<feature type="binding site" evidence="1">
    <location>
        <position position="129"/>
    </location>
    <ligand>
        <name>[4Fe-4S] cluster</name>
        <dbReference type="ChEBI" id="CHEBI:49883"/>
        <note>4Fe-4S-S-AdoMet</note>
    </ligand>
</feature>
<feature type="binding site" evidence="1">
    <location>
        <position position="132"/>
    </location>
    <ligand>
        <name>[4Fe-4S] cluster</name>
        <dbReference type="ChEBI" id="CHEBI:49883"/>
        <note>4Fe-4S-S-AdoMet</note>
    </ligand>
</feature>
<feature type="binding site" evidence="1">
    <location>
        <begin position="175"/>
        <end position="176"/>
    </location>
    <ligand>
        <name>S-adenosyl-L-methionine</name>
        <dbReference type="ChEBI" id="CHEBI:59789"/>
    </ligand>
</feature>
<feature type="binding site" evidence="1">
    <location>
        <position position="207"/>
    </location>
    <ligand>
        <name>S-adenosyl-L-methionine</name>
        <dbReference type="ChEBI" id="CHEBI:59789"/>
    </ligand>
</feature>
<feature type="binding site" evidence="1">
    <location>
        <begin position="230"/>
        <end position="232"/>
    </location>
    <ligand>
        <name>S-adenosyl-L-methionine</name>
        <dbReference type="ChEBI" id="CHEBI:59789"/>
    </ligand>
</feature>
<feature type="binding site" evidence="1">
    <location>
        <position position="306"/>
    </location>
    <ligand>
        <name>S-adenosyl-L-methionine</name>
        <dbReference type="ChEBI" id="CHEBI:59789"/>
    </ligand>
</feature>
<feature type="disulfide bond" description="(transient)" evidence="1">
    <location>
        <begin position="118"/>
        <end position="349"/>
    </location>
</feature>
<name>RLMN_BACC3</name>
<protein>
    <recommendedName>
        <fullName evidence="1">Probable dual-specificity RNA methyltransferase RlmN</fullName>
        <ecNumber evidence="1">2.1.1.192</ecNumber>
    </recommendedName>
    <alternativeName>
        <fullName evidence="1">23S rRNA (adenine(2503)-C(2))-methyltransferase</fullName>
    </alternativeName>
    <alternativeName>
        <fullName evidence="1">23S rRNA m2A2503 methyltransferase</fullName>
    </alternativeName>
    <alternativeName>
        <fullName evidence="1">Ribosomal RNA large subunit methyltransferase N</fullName>
    </alternativeName>
    <alternativeName>
        <fullName evidence="1">tRNA (adenine(37)-C(2))-methyltransferase</fullName>
    </alternativeName>
    <alternativeName>
        <fullName evidence="1">tRNA m2A37 methyltransferase</fullName>
    </alternativeName>
</protein>
<organism>
    <name type="scientific">Bacillus cereus (strain 03BB102)</name>
    <dbReference type="NCBI Taxonomy" id="572264"/>
    <lineage>
        <taxon>Bacteria</taxon>
        <taxon>Bacillati</taxon>
        <taxon>Bacillota</taxon>
        <taxon>Bacilli</taxon>
        <taxon>Bacillales</taxon>
        <taxon>Bacillaceae</taxon>
        <taxon>Bacillus</taxon>
        <taxon>Bacillus cereus group</taxon>
    </lineage>
</organism>
<accession>C1EP88</accession>
<sequence>METTVRKQKKNLETKKPSIYSLQLHEMQDWLKEQGEPKFRAGQIFDWLYKKRVKNYEDMSNLSKGLREKLSNSFDITTLNTLVKQTSSDGTIKFLFQLYDGYSIETVLMRHEYGNSICVTTQVGCRIGCTFCASTLGGLKRNLEAGEIVAQVVEVQRALDESEERVSSLVVMGIGEPFDNYDNLMGFLRIINHEKGLHIGARHMTVSTSGIIPKIYKFAEEDLQINFAISLHAPNSELRSKLMPINRAYKLPDLMEAIKYYVNRTGRRITFEYGLFGGENDQVEHAEELAALLKGVKCHVNLIPVNYVPERDYVRTPREQIFLFEKTLKDRGVNVTIRREQGHDIDAACGQLRAKERKEETR</sequence>
<gene>
    <name evidence="1" type="primary">rlmN</name>
    <name type="ordered locus">BCA_3964</name>
</gene>
<proteinExistence type="inferred from homology"/>
<keyword id="KW-0004">4Fe-4S</keyword>
<keyword id="KW-0963">Cytoplasm</keyword>
<keyword id="KW-1015">Disulfide bond</keyword>
<keyword id="KW-0408">Iron</keyword>
<keyword id="KW-0411">Iron-sulfur</keyword>
<keyword id="KW-0479">Metal-binding</keyword>
<keyword id="KW-0489">Methyltransferase</keyword>
<keyword id="KW-0698">rRNA processing</keyword>
<keyword id="KW-0949">S-adenosyl-L-methionine</keyword>
<keyword id="KW-0808">Transferase</keyword>
<keyword id="KW-0819">tRNA processing</keyword>
<evidence type="ECO:0000255" key="1">
    <source>
        <dbReference type="HAMAP-Rule" id="MF_01849"/>
    </source>
</evidence>
<evidence type="ECO:0000255" key="2">
    <source>
        <dbReference type="PROSITE-ProRule" id="PRU01266"/>
    </source>
</evidence>